<sequence length="384" mass="43320">MDLSRPRWSLWRRVFLMASLLACGICQASGQIFITQTLGIKGYRTVVALDKVPEDVQEYSWYWGANDSAGNMIISHKPPSAQQPGPMYTGRERVNREGSLLIRPTALNDTGNYTVRVVAGNETQRATGWLEVLELGSNLGISVNASSLVENMDSVAADCLTNVTNITWYVNDVPTSSSDRMTISPDGKTLVILRVSRYDRTIQCMIESFPEIFQRSERISLTVAYGPDYVLLRSNPDDFNGIVTAEIGSQVEMECICYSFLDLKYHWIHNGSLLNFSDAKMNLSSLAWEQMGRYRCTVENPVTQLIMYMDVRIQAPHEDLTCCPQRFLHLRIHGDVPHHADSAGWRLHLWSPDPCSDQPLLNQDKSGSMSVHPRPEDKTRRASR</sequence>
<evidence type="ECO:0000255" key="1"/>
<evidence type="ECO:0000255" key="2">
    <source>
        <dbReference type="PROSITE-ProRule" id="PRU00114"/>
    </source>
</evidence>
<evidence type="ECO:0000256" key="3">
    <source>
        <dbReference type="SAM" id="MobiDB-lite"/>
    </source>
</evidence>
<evidence type="ECO:0000305" key="4"/>
<evidence type="ECO:0000312" key="5">
    <source>
        <dbReference type="HGNC" id="HGNC:31949"/>
    </source>
</evidence>
<proteinExistence type="inferred from homology"/>
<dbReference type="EMBL" id="AC020914">
    <property type="status" value="NOT_ANNOTATED_CDS"/>
    <property type="molecule type" value="Genomic_DNA"/>
</dbReference>
<dbReference type="RefSeq" id="NP_001391990.1">
    <property type="nucleotide sequence ID" value="NM_001405061.1"/>
</dbReference>
<dbReference type="STRING" id="9606.ENSP00000379738"/>
<dbReference type="GlyCosmos" id="A8MTB9">
    <property type="glycosylation" value="5 sites, No reported glycans"/>
</dbReference>
<dbReference type="GlyGen" id="A8MTB9">
    <property type="glycosylation" value="6 sites, 1 O-linked glycan (1 site)"/>
</dbReference>
<dbReference type="BioMuta" id="HGNC:31949"/>
<dbReference type="MassIVE" id="A8MTB9"/>
<dbReference type="PaxDb" id="9606-ENSP00000379738"/>
<dbReference type="ProteomicsDB" id="2012"/>
<dbReference type="Antibodypedia" id="66739">
    <property type="antibodies" value="37 antibodies from 9 providers"/>
</dbReference>
<dbReference type="Ensembl" id="ENST00000396477.5">
    <property type="protein sequence ID" value="ENSP00000379738.4"/>
    <property type="gene ID" value="ENSG00000213822.7"/>
</dbReference>
<dbReference type="GeneID" id="729767"/>
<dbReference type="MANE-Select" id="ENST00000396477.5">
    <property type="protein sequence ID" value="ENSP00000379738.4"/>
    <property type="RefSeq nucleotide sequence ID" value="NM_001405061.1"/>
    <property type="RefSeq protein sequence ID" value="NP_001391990.1"/>
</dbReference>
<dbReference type="UCSC" id="uc061bxs.1">
    <property type="organism name" value="human"/>
</dbReference>
<dbReference type="AGR" id="HGNC:31949"/>
<dbReference type="GeneCards" id="CEACAM18"/>
<dbReference type="HGNC" id="HGNC:31949">
    <property type="gene designation" value="CEACAM18"/>
</dbReference>
<dbReference type="HPA" id="ENSG00000213822">
    <property type="expression patterns" value="Tissue enriched (intestine)"/>
</dbReference>
<dbReference type="neXtProt" id="NX_A8MTB9"/>
<dbReference type="OpenTargets" id="ENSG00000213822"/>
<dbReference type="PharmGKB" id="PA142672132"/>
<dbReference type="VEuPathDB" id="HostDB:ENSG00000213822"/>
<dbReference type="eggNOG" id="ENOG502RU0U">
    <property type="taxonomic scope" value="Eukaryota"/>
</dbReference>
<dbReference type="GeneTree" id="ENSGT01100000263479"/>
<dbReference type="HOGENOM" id="CLU_024555_0_0_1"/>
<dbReference type="InParanoid" id="A8MTB9"/>
<dbReference type="OMA" id="SLAWEQM"/>
<dbReference type="OrthoDB" id="6159398at2759"/>
<dbReference type="PAN-GO" id="A8MTB9">
    <property type="GO annotations" value="0 GO annotations based on evolutionary models"/>
</dbReference>
<dbReference type="TreeFam" id="TF336859"/>
<dbReference type="Pharos" id="A8MTB9">
    <property type="development level" value="Tdark"/>
</dbReference>
<dbReference type="PRO" id="PR:A8MTB9"/>
<dbReference type="Proteomes" id="UP000005640">
    <property type="component" value="Chromosome 19"/>
</dbReference>
<dbReference type="RNAct" id="A8MTB9">
    <property type="molecule type" value="protein"/>
</dbReference>
<dbReference type="Bgee" id="ENSG00000213822">
    <property type="expression patterns" value="Expressed in duodenum and 15 other cell types or tissues"/>
</dbReference>
<dbReference type="CDD" id="cd00096">
    <property type="entry name" value="Ig"/>
    <property type="match status" value="1"/>
</dbReference>
<dbReference type="Gene3D" id="2.60.40.10">
    <property type="entry name" value="Immunoglobulins"/>
    <property type="match status" value="3"/>
</dbReference>
<dbReference type="InterPro" id="IPR007110">
    <property type="entry name" value="Ig-like_dom"/>
</dbReference>
<dbReference type="InterPro" id="IPR036179">
    <property type="entry name" value="Ig-like_dom_sf"/>
</dbReference>
<dbReference type="InterPro" id="IPR013783">
    <property type="entry name" value="Ig-like_fold"/>
</dbReference>
<dbReference type="InterPro" id="IPR003599">
    <property type="entry name" value="Ig_sub"/>
</dbReference>
<dbReference type="InterPro" id="IPR003598">
    <property type="entry name" value="Ig_sub2"/>
</dbReference>
<dbReference type="InterPro" id="IPR052598">
    <property type="entry name" value="IgSF_CEA-related"/>
</dbReference>
<dbReference type="PANTHER" id="PTHR44337:SF10">
    <property type="entry name" value="CARCINOEMBRYONIC ANTIGEN-RELATED CELL ADHESION MOLECULE 18"/>
    <property type="match status" value="1"/>
</dbReference>
<dbReference type="PANTHER" id="PTHR44337">
    <property type="entry name" value="CARCINOEMBRYONIC ANTIGEN-RELATED CELL ADHESION MOLECULE 8"/>
    <property type="match status" value="1"/>
</dbReference>
<dbReference type="SMART" id="SM00409">
    <property type="entry name" value="IG"/>
    <property type="match status" value="3"/>
</dbReference>
<dbReference type="SMART" id="SM00408">
    <property type="entry name" value="IGc2"/>
    <property type="match status" value="1"/>
</dbReference>
<dbReference type="SUPFAM" id="SSF48726">
    <property type="entry name" value="Immunoglobulin"/>
    <property type="match status" value="3"/>
</dbReference>
<dbReference type="PROSITE" id="PS50835">
    <property type="entry name" value="IG_LIKE"/>
    <property type="match status" value="1"/>
</dbReference>
<keyword id="KW-1015">Disulfide bond</keyword>
<keyword id="KW-0325">Glycoprotein</keyword>
<keyword id="KW-0393">Immunoglobulin domain</keyword>
<keyword id="KW-1185">Reference proteome</keyword>
<keyword id="KW-0732">Signal</keyword>
<name>CEA18_HUMAN</name>
<gene>
    <name evidence="5" type="primary">CEACAM18</name>
</gene>
<accession>A8MTB9</accession>
<accession>C9JN24</accession>
<reference key="1">
    <citation type="journal article" date="2004" name="Nature">
        <title>The DNA sequence and biology of human chromosome 19.</title>
        <authorList>
            <person name="Grimwood J."/>
            <person name="Gordon L.A."/>
            <person name="Olsen A.S."/>
            <person name="Terry A."/>
            <person name="Schmutz J."/>
            <person name="Lamerdin J.E."/>
            <person name="Hellsten U."/>
            <person name="Goodstein D."/>
            <person name="Couronne O."/>
            <person name="Tran-Gyamfi M."/>
            <person name="Aerts A."/>
            <person name="Altherr M."/>
            <person name="Ashworth L."/>
            <person name="Bajorek E."/>
            <person name="Black S."/>
            <person name="Branscomb E."/>
            <person name="Caenepeel S."/>
            <person name="Carrano A.V."/>
            <person name="Caoile C."/>
            <person name="Chan Y.M."/>
            <person name="Christensen M."/>
            <person name="Cleland C.A."/>
            <person name="Copeland A."/>
            <person name="Dalin E."/>
            <person name="Dehal P."/>
            <person name="Denys M."/>
            <person name="Detter J.C."/>
            <person name="Escobar J."/>
            <person name="Flowers D."/>
            <person name="Fotopulos D."/>
            <person name="Garcia C."/>
            <person name="Georgescu A.M."/>
            <person name="Glavina T."/>
            <person name="Gomez M."/>
            <person name="Gonzales E."/>
            <person name="Groza M."/>
            <person name="Hammon N."/>
            <person name="Hawkins T."/>
            <person name="Haydu L."/>
            <person name="Ho I."/>
            <person name="Huang W."/>
            <person name="Israni S."/>
            <person name="Jett J."/>
            <person name="Kadner K."/>
            <person name="Kimball H."/>
            <person name="Kobayashi A."/>
            <person name="Larionov V."/>
            <person name="Leem S.-H."/>
            <person name="Lopez F."/>
            <person name="Lou Y."/>
            <person name="Lowry S."/>
            <person name="Malfatti S."/>
            <person name="Martinez D."/>
            <person name="McCready P.M."/>
            <person name="Medina C."/>
            <person name="Morgan J."/>
            <person name="Nelson K."/>
            <person name="Nolan M."/>
            <person name="Ovcharenko I."/>
            <person name="Pitluck S."/>
            <person name="Pollard M."/>
            <person name="Popkie A.P."/>
            <person name="Predki P."/>
            <person name="Quan G."/>
            <person name="Ramirez L."/>
            <person name="Rash S."/>
            <person name="Retterer J."/>
            <person name="Rodriguez A."/>
            <person name="Rogers S."/>
            <person name="Salamov A."/>
            <person name="Salazar A."/>
            <person name="She X."/>
            <person name="Smith D."/>
            <person name="Slezak T."/>
            <person name="Solovyev V."/>
            <person name="Thayer N."/>
            <person name="Tice H."/>
            <person name="Tsai M."/>
            <person name="Ustaszewska A."/>
            <person name="Vo N."/>
            <person name="Wagner M."/>
            <person name="Wheeler J."/>
            <person name="Wu K."/>
            <person name="Xie G."/>
            <person name="Yang J."/>
            <person name="Dubchak I."/>
            <person name="Furey T.S."/>
            <person name="DeJong P."/>
            <person name="Dickson M."/>
            <person name="Gordon D."/>
            <person name="Eichler E.E."/>
            <person name="Pennacchio L.A."/>
            <person name="Richardson P."/>
            <person name="Stubbs L."/>
            <person name="Rokhsar D.S."/>
            <person name="Myers R.M."/>
            <person name="Rubin E.M."/>
            <person name="Lucas S.M."/>
        </authorList>
    </citation>
    <scope>NUCLEOTIDE SEQUENCE [LARGE SCALE GENOMIC DNA]</scope>
</reference>
<protein>
    <recommendedName>
        <fullName evidence="4">Cell adhesion molecule CEACAM18</fullName>
    </recommendedName>
    <alternativeName>
        <fullName>Carcinoembryonic antigen-related cell adhesion molecule 18</fullName>
        <shortName evidence="5">CEA cell adhesion molecule 18</shortName>
    </alternativeName>
</protein>
<organism>
    <name type="scientific">Homo sapiens</name>
    <name type="common">Human</name>
    <dbReference type="NCBI Taxonomy" id="9606"/>
    <lineage>
        <taxon>Eukaryota</taxon>
        <taxon>Metazoa</taxon>
        <taxon>Chordata</taxon>
        <taxon>Craniata</taxon>
        <taxon>Vertebrata</taxon>
        <taxon>Euteleostomi</taxon>
        <taxon>Mammalia</taxon>
        <taxon>Eutheria</taxon>
        <taxon>Euarchontoglires</taxon>
        <taxon>Primates</taxon>
        <taxon>Haplorrhini</taxon>
        <taxon>Catarrhini</taxon>
        <taxon>Hominidae</taxon>
        <taxon>Homo</taxon>
    </lineage>
</organism>
<comment type="similarity">
    <text evidence="4">Belongs to the immunoglobulin superfamily. CEA family.</text>
</comment>
<feature type="signal peptide" evidence="1">
    <location>
        <begin position="1"/>
        <end position="30"/>
    </location>
</feature>
<feature type="chain" id="PRO_0000339378" description="Cell adhesion molecule CEACAM18">
    <location>
        <begin position="31"/>
        <end position="384"/>
    </location>
</feature>
<feature type="domain" description="Ig-like C2-type">
    <location>
        <begin position="227"/>
        <end position="314"/>
    </location>
</feature>
<feature type="region of interest" description="Disordered" evidence="3">
    <location>
        <begin position="358"/>
        <end position="384"/>
    </location>
</feature>
<feature type="compositionally biased region" description="Polar residues" evidence="3">
    <location>
        <begin position="359"/>
        <end position="369"/>
    </location>
</feature>
<feature type="compositionally biased region" description="Basic and acidic residues" evidence="3">
    <location>
        <begin position="373"/>
        <end position="384"/>
    </location>
</feature>
<feature type="glycosylation site" description="N-linked (GlcNAc...) asparagine" evidence="1">
    <location>
        <position position="108"/>
    </location>
</feature>
<feature type="glycosylation site" description="N-linked (GlcNAc...) asparagine" evidence="1">
    <location>
        <position position="112"/>
    </location>
</feature>
<feature type="glycosylation site" description="N-linked (GlcNAc...) asparagine" evidence="1">
    <location>
        <position position="121"/>
    </location>
</feature>
<feature type="glycosylation site" description="N-linked (GlcNAc...) asparagine" evidence="1">
    <location>
        <position position="162"/>
    </location>
</feature>
<feature type="glycosylation site" description="N-linked (GlcNAc...) asparagine" evidence="1">
    <location>
        <position position="270"/>
    </location>
</feature>
<feature type="disulfide bond" evidence="2">
    <location>
        <begin position="255"/>
        <end position="296"/>
    </location>
</feature>
<feature type="sequence variant" id="VAR_043976" description="In dbSNP:rs8106673.">
    <original>L</original>
    <variation>H</variation>
    <location>
        <position position="160"/>
    </location>
</feature>
<feature type="sequence variant" id="VAR_043977" description="In dbSNP:rs12610545.">
    <original>T</original>
    <variation>A</variation>
    <location>
        <position position="161"/>
    </location>
</feature>